<sequence length="494" mass="56364">MSGEATVLAYHAPEEQEGLLVVKVEEENYVLDQDFGLQENPWSQEVFRQKFRQFSYSDSTGPREALSRLRELCCQWLRPEVHSKEQILELLMLEQFLAILPEELQAWLREHRPENGEEAVTMLEELEKELEEPRQQDTTHGQEMFWQEMTSTGALKSLSLNSPVQPLENQCKTETQESQAFQERDGRMVAGKVLMAKQEIVECVASAAMISPGKLPGETHSQRIAEEALGGLDNSKKQKGNAAGNKISQLPSQDRHFSLATFNRRIPTEHSVLESHESEGSFSMNSNDITQQSVDTREKLYECFDCGKAFCQSSKLIRHQRIHTGERPYACKECGKAFSLSSDLVRHQRIHSGEKPYECCECGKAFRGSSELIRHRRIHTGEKPYECGECGKAFSRSSALIQHKKIHTGDKSYECIACGKAFGRSSILIEHQRIHTGEKPYECNECGKSFNQSSALTQHQRIHTGEKPYECSECRKTFRHRSGLMQHQRTHTRV</sequence>
<dbReference type="EMBL" id="AY234408">
    <property type="protein sequence ID" value="AAO89074.1"/>
    <property type="molecule type" value="mRNA"/>
</dbReference>
<dbReference type="EMBL" id="AK131291">
    <property type="protein sequence ID" value="BAD18462.1"/>
    <property type="molecule type" value="mRNA"/>
</dbReference>
<dbReference type="EMBL" id="AK303447">
    <property type="protein sequence ID" value="BAG64492.1"/>
    <property type="molecule type" value="mRNA"/>
</dbReference>
<dbReference type="EMBL" id="CH471088">
    <property type="protein sequence ID" value="EAX01344.1"/>
    <property type="molecule type" value="Genomic_DNA"/>
</dbReference>
<dbReference type="EMBL" id="AF303374">
    <property type="protein sequence ID" value="AAL26786.1"/>
    <property type="status" value="ALT_SEQ"/>
    <property type="molecule type" value="mRNA"/>
</dbReference>
<dbReference type="CCDS" id="CCDS42427.1">
    <molecule id="Q86W11-1"/>
</dbReference>
<dbReference type="RefSeq" id="NP_001106205.1">
    <molecule id="Q86W11-1"/>
    <property type="nucleotide sequence ID" value="NM_001112734.4"/>
</dbReference>
<dbReference type="RefSeq" id="NP_001159484.1">
    <molecule id="Q86W11-1"/>
    <property type="nucleotide sequence ID" value="NM_001166012.3"/>
</dbReference>
<dbReference type="RefSeq" id="NP_001275640.1">
    <property type="nucleotide sequence ID" value="NM_001288711.1"/>
</dbReference>
<dbReference type="RefSeq" id="XP_005258240.1">
    <molecule id="Q86W11-1"/>
    <property type="nucleotide sequence ID" value="XM_005258183.5"/>
</dbReference>
<dbReference type="RefSeq" id="XP_006722434.1">
    <property type="nucleotide sequence ID" value="XM_006722371.3"/>
</dbReference>
<dbReference type="RefSeq" id="XP_011524091.1">
    <property type="nucleotide sequence ID" value="XM_011525789.2"/>
</dbReference>
<dbReference type="RefSeq" id="XP_016881004.1">
    <property type="nucleotide sequence ID" value="XM_017025515.1"/>
</dbReference>
<dbReference type="RefSeq" id="XP_016881008.1">
    <property type="nucleotide sequence ID" value="XM_017025519.1"/>
</dbReference>
<dbReference type="RefSeq" id="XP_016881009.1">
    <property type="nucleotide sequence ID" value="XM_017025520.1"/>
</dbReference>
<dbReference type="RefSeq" id="XP_016881010.1">
    <property type="nucleotide sequence ID" value="XM_017025521.1"/>
</dbReference>
<dbReference type="RefSeq" id="XP_016881011.1">
    <property type="nucleotide sequence ID" value="XM_017025522.1"/>
</dbReference>
<dbReference type="RefSeq" id="XP_047293223.1">
    <molecule id="Q86W11-1"/>
    <property type="nucleotide sequence ID" value="XM_047437267.1"/>
</dbReference>
<dbReference type="SMR" id="Q86W11"/>
<dbReference type="BioGRID" id="755850">
    <property type="interactions" value="15"/>
</dbReference>
<dbReference type="FunCoup" id="Q86W11">
    <property type="interactions" value="247"/>
</dbReference>
<dbReference type="IntAct" id="Q86W11">
    <property type="interactions" value="14"/>
</dbReference>
<dbReference type="MINT" id="Q86W11"/>
<dbReference type="STRING" id="9606.ENSP00000392371"/>
<dbReference type="GlyGen" id="Q86W11">
    <property type="glycosylation" value="1 site, 1 O-linked glycan (1 site)"/>
</dbReference>
<dbReference type="iPTMnet" id="Q86W11"/>
<dbReference type="PhosphoSitePlus" id="Q86W11"/>
<dbReference type="BioMuta" id="ZSCAN30"/>
<dbReference type="DMDM" id="74759452"/>
<dbReference type="jPOST" id="Q86W11"/>
<dbReference type="MassIVE" id="Q86W11"/>
<dbReference type="PaxDb" id="9606-ENSP00000392371"/>
<dbReference type="PeptideAtlas" id="Q86W11"/>
<dbReference type="ProteomicsDB" id="70101">
    <molecule id="Q86W11-1"/>
</dbReference>
<dbReference type="ProteomicsDB" id="70102">
    <molecule id="Q86W11-3"/>
</dbReference>
<dbReference type="ABCD" id="Q86W11">
    <property type="antibodies" value="2 sequenced antibodies"/>
</dbReference>
<dbReference type="Antibodypedia" id="1836">
    <property type="antibodies" value="14 antibodies from 8 providers"/>
</dbReference>
<dbReference type="DNASU" id="100101467"/>
<dbReference type="Ensembl" id="ENST00000333206.10">
    <molecule id="Q86W11-1"/>
    <property type="protein sequence ID" value="ENSP00000329738.4"/>
    <property type="gene ID" value="ENSG00000186814.15"/>
</dbReference>
<dbReference type="Ensembl" id="ENST00000420878.7">
    <molecule id="Q86W11-1"/>
    <property type="protein sequence ID" value="ENSP00000392371.2"/>
    <property type="gene ID" value="ENSG00000186814.15"/>
</dbReference>
<dbReference type="GeneID" id="100101467"/>
<dbReference type="KEGG" id="hsa:100101467"/>
<dbReference type="MANE-Select" id="ENST00000333206.10">
    <property type="protein sequence ID" value="ENSP00000329738.4"/>
    <property type="RefSeq nucleotide sequence ID" value="NM_001112734.4"/>
    <property type="RefSeq protein sequence ID" value="NP_001106205.1"/>
</dbReference>
<dbReference type="UCSC" id="uc002kyl.5">
    <molecule id="Q86W11-1"/>
    <property type="organism name" value="human"/>
</dbReference>
<dbReference type="AGR" id="HGNC:33517"/>
<dbReference type="CTD" id="100101467"/>
<dbReference type="DisGeNET" id="100101467"/>
<dbReference type="GeneCards" id="ZSCAN30"/>
<dbReference type="HGNC" id="HGNC:33517">
    <property type="gene designation" value="ZSCAN30"/>
</dbReference>
<dbReference type="HPA" id="ENSG00000186814">
    <property type="expression patterns" value="Low tissue specificity"/>
</dbReference>
<dbReference type="neXtProt" id="NX_Q86W11"/>
<dbReference type="OpenTargets" id="ENSG00000186814"/>
<dbReference type="PharmGKB" id="PA165429212"/>
<dbReference type="VEuPathDB" id="HostDB:ENSG00000186814"/>
<dbReference type="eggNOG" id="KOG1721">
    <property type="taxonomic scope" value="Eukaryota"/>
</dbReference>
<dbReference type="GeneTree" id="ENSGT00940000162162"/>
<dbReference type="HOGENOM" id="CLU_002678_49_3_1"/>
<dbReference type="InParanoid" id="Q86W11"/>
<dbReference type="OMA" id="NQCKSEA"/>
<dbReference type="OrthoDB" id="6077919at2759"/>
<dbReference type="PAN-GO" id="Q86W11">
    <property type="GO annotations" value="3 GO annotations based on evolutionary models"/>
</dbReference>
<dbReference type="PhylomeDB" id="Q86W11"/>
<dbReference type="TreeFam" id="TF338304"/>
<dbReference type="PathwayCommons" id="Q86W11"/>
<dbReference type="SignaLink" id="Q86W11"/>
<dbReference type="BioGRID-ORCS" id="100101467">
    <property type="hits" value="14 hits in 1181 CRISPR screens"/>
</dbReference>
<dbReference type="ChiTaRS" id="ZSCAN30">
    <property type="organism name" value="human"/>
</dbReference>
<dbReference type="GenomeRNAi" id="100101467"/>
<dbReference type="Pharos" id="Q86W11">
    <property type="development level" value="Tdark"/>
</dbReference>
<dbReference type="PRO" id="PR:Q86W11"/>
<dbReference type="Proteomes" id="UP000005640">
    <property type="component" value="Chromosome 18"/>
</dbReference>
<dbReference type="RNAct" id="Q86W11">
    <property type="molecule type" value="protein"/>
</dbReference>
<dbReference type="Bgee" id="ENSG00000186814">
    <property type="expression patterns" value="Expressed in sural nerve and 184 other cell types or tissues"/>
</dbReference>
<dbReference type="ExpressionAtlas" id="Q86W11">
    <property type="expression patterns" value="baseline and differential"/>
</dbReference>
<dbReference type="GO" id="GO:0005634">
    <property type="term" value="C:nucleus"/>
    <property type="evidence" value="ECO:0007669"/>
    <property type="project" value="UniProtKB-SubCell"/>
</dbReference>
<dbReference type="GO" id="GO:0000981">
    <property type="term" value="F:DNA-binding transcription factor activity, RNA polymerase II-specific"/>
    <property type="evidence" value="ECO:0000318"/>
    <property type="project" value="GO_Central"/>
</dbReference>
<dbReference type="GO" id="GO:0000978">
    <property type="term" value="F:RNA polymerase II cis-regulatory region sequence-specific DNA binding"/>
    <property type="evidence" value="ECO:0000318"/>
    <property type="project" value="GO_Central"/>
</dbReference>
<dbReference type="GO" id="GO:0008270">
    <property type="term" value="F:zinc ion binding"/>
    <property type="evidence" value="ECO:0007669"/>
    <property type="project" value="UniProtKB-KW"/>
</dbReference>
<dbReference type="GO" id="GO:0006357">
    <property type="term" value="P:regulation of transcription by RNA polymerase II"/>
    <property type="evidence" value="ECO:0000318"/>
    <property type="project" value="GO_Central"/>
</dbReference>
<dbReference type="CDD" id="cd07936">
    <property type="entry name" value="SCAN"/>
    <property type="match status" value="1"/>
</dbReference>
<dbReference type="FunFam" id="3.30.160.60:FF:001561">
    <property type="entry name" value="Zinc finger and SCAN domain containing 30"/>
    <property type="match status" value="1"/>
</dbReference>
<dbReference type="FunFam" id="3.30.160.60:FF:000348">
    <property type="entry name" value="zinc finger protein 260"/>
    <property type="match status" value="1"/>
</dbReference>
<dbReference type="FunFam" id="1.10.4020.10:FF:000001">
    <property type="entry name" value="zinc finger protein 263 isoform X1"/>
    <property type="match status" value="1"/>
</dbReference>
<dbReference type="FunFam" id="3.30.160.60:FF:000352">
    <property type="entry name" value="zinc finger protein 3 homolog"/>
    <property type="match status" value="1"/>
</dbReference>
<dbReference type="FunFam" id="3.30.160.60:FF:002254">
    <property type="entry name" value="Zinc finger protein 540"/>
    <property type="match status" value="1"/>
</dbReference>
<dbReference type="FunFam" id="3.30.160.60:FF:000737">
    <property type="entry name" value="Zinc finger protein 565"/>
    <property type="match status" value="1"/>
</dbReference>
<dbReference type="FunFam" id="3.30.160.60:FF:001697">
    <property type="entry name" value="zinc finger protein 623"/>
    <property type="match status" value="1"/>
</dbReference>
<dbReference type="FunFam" id="3.30.160.60:FF:000009">
    <property type="entry name" value="zinc finger protein 79 isoform X2"/>
    <property type="match status" value="1"/>
</dbReference>
<dbReference type="Gene3D" id="3.30.160.60">
    <property type="entry name" value="Classic Zinc Finger"/>
    <property type="match status" value="7"/>
</dbReference>
<dbReference type="Gene3D" id="1.10.4020.10">
    <property type="entry name" value="DNA breaking-rejoining enzymes"/>
    <property type="match status" value="1"/>
</dbReference>
<dbReference type="InterPro" id="IPR003309">
    <property type="entry name" value="SCAN_dom"/>
</dbReference>
<dbReference type="InterPro" id="IPR038269">
    <property type="entry name" value="SCAN_sf"/>
</dbReference>
<dbReference type="InterPro" id="IPR036236">
    <property type="entry name" value="Znf_C2H2_sf"/>
</dbReference>
<dbReference type="InterPro" id="IPR013087">
    <property type="entry name" value="Znf_C2H2_type"/>
</dbReference>
<dbReference type="PANTHER" id="PTHR23226">
    <property type="entry name" value="ZINC FINGER AND SCAN DOMAIN-CONTAINING"/>
    <property type="match status" value="1"/>
</dbReference>
<dbReference type="PANTHER" id="PTHR23226:SF366">
    <property type="entry name" value="ZINC FINGER PROTEIN ZFP2"/>
    <property type="match status" value="1"/>
</dbReference>
<dbReference type="Pfam" id="PF02023">
    <property type="entry name" value="SCAN"/>
    <property type="match status" value="1"/>
</dbReference>
<dbReference type="Pfam" id="PF00096">
    <property type="entry name" value="zf-C2H2"/>
    <property type="match status" value="6"/>
</dbReference>
<dbReference type="SMART" id="SM00431">
    <property type="entry name" value="SCAN"/>
    <property type="match status" value="1"/>
</dbReference>
<dbReference type="SMART" id="SM00355">
    <property type="entry name" value="ZnF_C2H2"/>
    <property type="match status" value="7"/>
</dbReference>
<dbReference type="SUPFAM" id="SSF57667">
    <property type="entry name" value="beta-beta-alpha zinc fingers"/>
    <property type="match status" value="4"/>
</dbReference>
<dbReference type="SUPFAM" id="SSF47353">
    <property type="entry name" value="Retrovirus capsid dimerization domain-like"/>
    <property type="match status" value="1"/>
</dbReference>
<dbReference type="PROSITE" id="PS50804">
    <property type="entry name" value="SCAN_BOX"/>
    <property type="match status" value="1"/>
</dbReference>
<dbReference type="PROSITE" id="PS00028">
    <property type="entry name" value="ZINC_FINGER_C2H2_1"/>
    <property type="match status" value="7"/>
</dbReference>
<dbReference type="PROSITE" id="PS50157">
    <property type="entry name" value="ZINC_FINGER_C2H2_2"/>
    <property type="match status" value="7"/>
</dbReference>
<evidence type="ECO:0000255" key="1">
    <source>
        <dbReference type="PROSITE-ProRule" id="PRU00042"/>
    </source>
</evidence>
<evidence type="ECO:0000255" key="2">
    <source>
        <dbReference type="PROSITE-ProRule" id="PRU00187"/>
    </source>
</evidence>
<evidence type="ECO:0000303" key="3">
    <source>
    </source>
</evidence>
<evidence type="ECO:0000305" key="4"/>
<evidence type="ECO:0007744" key="5">
    <source>
    </source>
</evidence>
<keyword id="KW-0025">Alternative splicing</keyword>
<keyword id="KW-0238">DNA-binding</keyword>
<keyword id="KW-1017">Isopeptide bond</keyword>
<keyword id="KW-0479">Metal-binding</keyword>
<keyword id="KW-0539">Nucleus</keyword>
<keyword id="KW-1267">Proteomics identification</keyword>
<keyword id="KW-1185">Reference proteome</keyword>
<keyword id="KW-0677">Repeat</keyword>
<keyword id="KW-0804">Transcription</keyword>
<keyword id="KW-0805">Transcription regulation</keyword>
<keyword id="KW-0832">Ubl conjugation</keyword>
<keyword id="KW-0862">Zinc</keyword>
<keyword id="KW-0863">Zinc-finger</keyword>
<gene>
    <name type="primary">ZSCAN30</name>
    <name type="synonym">ZNF397OS</name>
</gene>
<protein>
    <recommendedName>
        <fullName>Zinc finger and SCAN domain-containing protein 30</fullName>
    </recommendedName>
    <alternativeName>
        <fullName>ZNF-WYM</fullName>
    </alternativeName>
    <alternativeName>
        <fullName>Zinc finger protein 397 opposite strand</fullName>
    </alternativeName>
    <alternativeName>
        <fullName>Zinc finger protein 397OS</fullName>
    </alternativeName>
</protein>
<name>ZSC30_HUMAN</name>
<organism>
    <name type="scientific">Homo sapiens</name>
    <name type="common">Human</name>
    <dbReference type="NCBI Taxonomy" id="9606"/>
    <lineage>
        <taxon>Eukaryota</taxon>
        <taxon>Metazoa</taxon>
        <taxon>Chordata</taxon>
        <taxon>Craniata</taxon>
        <taxon>Vertebrata</taxon>
        <taxon>Euteleostomi</taxon>
        <taxon>Mammalia</taxon>
        <taxon>Eutheria</taxon>
        <taxon>Euarchontoglires</taxon>
        <taxon>Primates</taxon>
        <taxon>Haplorrhini</taxon>
        <taxon>Catarrhini</taxon>
        <taxon>Hominidae</taxon>
        <taxon>Homo</taxon>
    </lineage>
</organism>
<feature type="chain" id="PRO_0000300694" description="Zinc finger and SCAN domain-containing protein 30">
    <location>
        <begin position="1"/>
        <end position="494"/>
    </location>
</feature>
<feature type="domain" description="SCAN box" evidence="2">
    <location>
        <begin position="48"/>
        <end position="130"/>
    </location>
</feature>
<feature type="zinc finger region" description="C2H2-type 1" evidence="1">
    <location>
        <begin position="301"/>
        <end position="323"/>
    </location>
</feature>
<feature type="zinc finger region" description="C2H2-type 2" evidence="1">
    <location>
        <begin position="329"/>
        <end position="351"/>
    </location>
</feature>
<feature type="zinc finger region" description="C2H2-type 3" evidence="1">
    <location>
        <begin position="357"/>
        <end position="379"/>
    </location>
</feature>
<feature type="zinc finger region" description="C2H2-type 4" evidence="1">
    <location>
        <begin position="385"/>
        <end position="407"/>
    </location>
</feature>
<feature type="zinc finger region" description="C2H2-type 5" evidence="1">
    <location>
        <begin position="413"/>
        <end position="435"/>
    </location>
</feature>
<feature type="zinc finger region" description="C2H2-type 6" evidence="1">
    <location>
        <begin position="441"/>
        <end position="463"/>
    </location>
</feature>
<feature type="zinc finger region" description="C2H2-type 7" evidence="1">
    <location>
        <begin position="469"/>
        <end position="491"/>
    </location>
</feature>
<feature type="cross-link" description="Glycyl lysine isopeptide (Lys-Gly) (interchain with G-Cter in SUMO2)" evidence="5">
    <location>
        <position position="197"/>
    </location>
</feature>
<feature type="splice variant" id="VSP_027861" description="In isoform 2." evidence="3">
    <original>RMVAGKVLMAKQEIVECVASAAMISPGKLPGETHS</original>
    <variation>VSLCHPGWSAVVQPQLTAVALNPWVKVILLPQPPE</variation>
    <location>
        <begin position="187"/>
        <end position="221"/>
    </location>
</feature>
<feature type="splice variant" id="VSP_027862" description="In isoform 2." evidence="3">
    <location>
        <begin position="222"/>
        <end position="494"/>
    </location>
</feature>
<feature type="sequence variant" id="VAR_059914" description="In dbSNP:rs2249769.">
    <original>Q</original>
    <variation>P</variation>
    <location>
        <position position="238"/>
    </location>
</feature>
<comment type="function">
    <text>May be involved in transcriptional regulation.</text>
</comment>
<comment type="interaction">
    <interactant intactId="EBI-11793064">
        <id>Q86W11</id>
    </interactant>
    <interactant intactId="EBI-725515">
        <id>O43559</id>
        <label>FRS3</label>
    </interactant>
    <organismsDiffer>false</organismsDiffer>
    <experiments>3</experiments>
</comment>
<comment type="interaction">
    <interactant intactId="EBI-11793064">
        <id>Q86W11</id>
    </interactant>
    <interactant intactId="EBI-395959">
        <id>Q15287</id>
        <label>RNPS1</label>
    </interactant>
    <organismsDiffer>false</organismsDiffer>
    <experiments>3</experiments>
</comment>
<comment type="interaction">
    <interactant intactId="EBI-11793064">
        <id>Q86W11</id>
    </interactant>
    <interactant intactId="EBI-2818641">
        <id>Q969J2</id>
        <label>ZKSCAN4</label>
    </interactant>
    <organismsDiffer>false</organismsDiffer>
    <experiments>3</experiments>
</comment>
<comment type="interaction">
    <interactant intactId="EBI-11793064">
        <id>Q86W11</id>
    </interactant>
    <interactant intactId="EBI-740232">
        <id>Q9NWS9-2</id>
        <label>ZNF446</label>
    </interactant>
    <organismsDiffer>false</organismsDiffer>
    <experiments>3</experiments>
</comment>
<comment type="subcellular location">
    <subcellularLocation>
        <location evidence="4">Nucleus</location>
    </subcellularLocation>
</comment>
<comment type="alternative products">
    <event type="alternative splicing"/>
    <isoform>
        <id>Q86W11-1</id>
        <name>1</name>
        <sequence type="displayed"/>
    </isoform>
    <isoform>
        <id>Q86W11-3</id>
        <name>2</name>
        <sequence type="described" ref="VSP_027861 VSP_027862"/>
    </isoform>
</comment>
<comment type="similarity">
    <text evidence="4">Belongs to the krueppel C2H2-type zinc-finger protein family.</text>
</comment>
<comment type="sequence caution" evidence="4">
    <conflict type="miscellaneous discrepancy">
        <sequence resource="EMBL-CDS" id="AAL26786"/>
    </conflict>
    <text>Probable cloning artifact.</text>
</comment>
<proteinExistence type="evidence at protein level"/>
<accession>Q86W11</accession>
<accession>B4E0N0</accession>
<accession>Q6ZNB3</accession>
<accession>Q96PN3</accession>
<reference key="1">
    <citation type="journal article" date="2003" name="Gene">
        <title>Identification and characterization of two novel human SCAN domain-containing zinc finger genes ZNF396 and ZNF397.</title>
        <authorList>
            <person name="Wu Y."/>
            <person name="Yu L."/>
            <person name="Bi G."/>
            <person name="Luo K."/>
            <person name="Zhou G."/>
            <person name="Zhao S."/>
        </authorList>
    </citation>
    <scope>NUCLEOTIDE SEQUENCE [MRNA] (ISOFORM 1)</scope>
</reference>
<reference key="2">
    <citation type="journal article" date="2004" name="Nat. Genet.">
        <title>Complete sequencing and characterization of 21,243 full-length human cDNAs.</title>
        <authorList>
            <person name="Ota T."/>
            <person name="Suzuki Y."/>
            <person name="Nishikawa T."/>
            <person name="Otsuki T."/>
            <person name="Sugiyama T."/>
            <person name="Irie R."/>
            <person name="Wakamatsu A."/>
            <person name="Hayashi K."/>
            <person name="Sato H."/>
            <person name="Nagai K."/>
            <person name="Kimura K."/>
            <person name="Makita H."/>
            <person name="Sekine M."/>
            <person name="Obayashi M."/>
            <person name="Nishi T."/>
            <person name="Shibahara T."/>
            <person name="Tanaka T."/>
            <person name="Ishii S."/>
            <person name="Yamamoto J."/>
            <person name="Saito K."/>
            <person name="Kawai Y."/>
            <person name="Isono Y."/>
            <person name="Nakamura Y."/>
            <person name="Nagahari K."/>
            <person name="Murakami K."/>
            <person name="Yasuda T."/>
            <person name="Iwayanagi T."/>
            <person name="Wagatsuma M."/>
            <person name="Shiratori A."/>
            <person name="Sudo H."/>
            <person name="Hosoiri T."/>
            <person name="Kaku Y."/>
            <person name="Kodaira H."/>
            <person name="Kondo H."/>
            <person name="Sugawara M."/>
            <person name="Takahashi M."/>
            <person name="Kanda K."/>
            <person name="Yokoi T."/>
            <person name="Furuya T."/>
            <person name="Kikkawa E."/>
            <person name="Omura Y."/>
            <person name="Abe K."/>
            <person name="Kamihara K."/>
            <person name="Katsuta N."/>
            <person name="Sato K."/>
            <person name="Tanikawa M."/>
            <person name="Yamazaki M."/>
            <person name="Ninomiya K."/>
            <person name="Ishibashi T."/>
            <person name="Yamashita H."/>
            <person name="Murakawa K."/>
            <person name="Fujimori K."/>
            <person name="Tanai H."/>
            <person name="Kimata M."/>
            <person name="Watanabe M."/>
            <person name="Hiraoka S."/>
            <person name="Chiba Y."/>
            <person name="Ishida S."/>
            <person name="Ono Y."/>
            <person name="Takiguchi S."/>
            <person name="Watanabe S."/>
            <person name="Yosida M."/>
            <person name="Hotuta T."/>
            <person name="Kusano J."/>
            <person name="Kanehori K."/>
            <person name="Takahashi-Fujii A."/>
            <person name="Hara H."/>
            <person name="Tanase T.-O."/>
            <person name="Nomura Y."/>
            <person name="Togiya S."/>
            <person name="Komai F."/>
            <person name="Hara R."/>
            <person name="Takeuchi K."/>
            <person name="Arita M."/>
            <person name="Imose N."/>
            <person name="Musashino K."/>
            <person name="Yuuki H."/>
            <person name="Oshima A."/>
            <person name="Sasaki N."/>
            <person name="Aotsuka S."/>
            <person name="Yoshikawa Y."/>
            <person name="Matsunawa H."/>
            <person name="Ichihara T."/>
            <person name="Shiohata N."/>
            <person name="Sano S."/>
            <person name="Moriya S."/>
            <person name="Momiyama H."/>
            <person name="Satoh N."/>
            <person name="Takami S."/>
            <person name="Terashima Y."/>
            <person name="Suzuki O."/>
            <person name="Nakagawa S."/>
            <person name="Senoh A."/>
            <person name="Mizoguchi H."/>
            <person name="Goto Y."/>
            <person name="Shimizu F."/>
            <person name="Wakebe H."/>
            <person name="Hishigaki H."/>
            <person name="Watanabe T."/>
            <person name="Sugiyama A."/>
            <person name="Takemoto M."/>
            <person name="Kawakami B."/>
            <person name="Yamazaki M."/>
            <person name="Watanabe K."/>
            <person name="Kumagai A."/>
            <person name="Itakura S."/>
            <person name="Fukuzumi Y."/>
            <person name="Fujimori Y."/>
            <person name="Komiyama M."/>
            <person name="Tashiro H."/>
            <person name="Tanigami A."/>
            <person name="Fujiwara T."/>
            <person name="Ono T."/>
            <person name="Yamada K."/>
            <person name="Fujii Y."/>
            <person name="Ozaki K."/>
            <person name="Hirao M."/>
            <person name="Ohmori Y."/>
            <person name="Kawabata A."/>
            <person name="Hikiji T."/>
            <person name="Kobatake N."/>
            <person name="Inagaki H."/>
            <person name="Ikema Y."/>
            <person name="Okamoto S."/>
            <person name="Okitani R."/>
            <person name="Kawakami T."/>
            <person name="Noguchi S."/>
            <person name="Itoh T."/>
            <person name="Shigeta K."/>
            <person name="Senba T."/>
            <person name="Matsumura K."/>
            <person name="Nakajima Y."/>
            <person name="Mizuno T."/>
            <person name="Morinaga M."/>
            <person name="Sasaki M."/>
            <person name="Togashi T."/>
            <person name="Oyama M."/>
            <person name="Hata H."/>
            <person name="Watanabe M."/>
            <person name="Komatsu T."/>
            <person name="Mizushima-Sugano J."/>
            <person name="Satoh T."/>
            <person name="Shirai Y."/>
            <person name="Takahashi Y."/>
            <person name="Nakagawa K."/>
            <person name="Okumura K."/>
            <person name="Nagase T."/>
            <person name="Nomura N."/>
            <person name="Kikuchi H."/>
            <person name="Masuho Y."/>
            <person name="Yamashita R."/>
            <person name="Nakai K."/>
            <person name="Yada T."/>
            <person name="Nakamura Y."/>
            <person name="Ohara O."/>
            <person name="Isogai T."/>
            <person name="Sugano S."/>
        </authorList>
    </citation>
    <scope>NUCLEOTIDE SEQUENCE [LARGE SCALE MRNA] (ISOFORMS 1 AND 2)</scope>
    <source>
        <tissue>Chondrocyte</tissue>
        <tissue>Thymus</tissue>
    </source>
</reference>
<reference key="3">
    <citation type="submission" date="2005-07" db="EMBL/GenBank/DDBJ databases">
        <authorList>
            <person name="Mural R.J."/>
            <person name="Istrail S."/>
            <person name="Sutton G.G."/>
            <person name="Florea L."/>
            <person name="Halpern A.L."/>
            <person name="Mobarry C.M."/>
            <person name="Lippert R."/>
            <person name="Walenz B."/>
            <person name="Shatkay H."/>
            <person name="Dew I."/>
            <person name="Miller J.R."/>
            <person name="Flanigan M.J."/>
            <person name="Edwards N.J."/>
            <person name="Bolanos R."/>
            <person name="Fasulo D."/>
            <person name="Halldorsson B.V."/>
            <person name="Hannenhalli S."/>
            <person name="Turner R."/>
            <person name="Yooseph S."/>
            <person name="Lu F."/>
            <person name="Nusskern D.R."/>
            <person name="Shue B.C."/>
            <person name="Zheng X.H."/>
            <person name="Zhong F."/>
            <person name="Delcher A.L."/>
            <person name="Huson D.H."/>
            <person name="Kravitz S.A."/>
            <person name="Mouchard L."/>
            <person name="Reinert K."/>
            <person name="Remington K.A."/>
            <person name="Clark A.G."/>
            <person name="Waterman M.S."/>
            <person name="Eichler E.E."/>
            <person name="Adams M.D."/>
            <person name="Hunkapiller M.W."/>
            <person name="Myers E.W."/>
            <person name="Venter J.C."/>
        </authorList>
    </citation>
    <scope>NUCLEOTIDE SEQUENCE [LARGE SCALE GENOMIC DNA]</scope>
</reference>
<reference key="4">
    <citation type="submission" date="2000-09" db="EMBL/GenBank/DDBJ databases">
        <title>Activated B lymphocyte gene.</title>
        <authorList>
            <person name="Lu X.-W."/>
            <person name="Cui L.-X."/>
            <person name="Li Y.-H."/>
        </authorList>
    </citation>
    <scope>NUCLEOTIDE SEQUENCE [MRNA] OF 185-494 (ISOFORM 1)</scope>
</reference>
<reference key="5">
    <citation type="journal article" date="2009" name="Anal. Chem.">
        <title>Lys-N and trypsin cover complementary parts of the phosphoproteome in a refined SCX-based approach.</title>
        <authorList>
            <person name="Gauci S."/>
            <person name="Helbig A.O."/>
            <person name="Slijper M."/>
            <person name="Krijgsveld J."/>
            <person name="Heck A.J."/>
            <person name="Mohammed S."/>
        </authorList>
    </citation>
    <scope>IDENTIFICATION BY MASS SPECTROMETRY [LARGE SCALE ANALYSIS]</scope>
</reference>
<reference key="6">
    <citation type="journal article" date="2017" name="Nat. Struct. Mol. Biol.">
        <title>Site-specific mapping of the human SUMO proteome reveals co-modification with phosphorylation.</title>
        <authorList>
            <person name="Hendriks I.A."/>
            <person name="Lyon D."/>
            <person name="Young C."/>
            <person name="Jensen L.J."/>
            <person name="Vertegaal A.C."/>
            <person name="Nielsen M.L."/>
        </authorList>
    </citation>
    <scope>SUMOYLATION [LARGE SCALE ANALYSIS] AT LYS-197</scope>
    <scope>IDENTIFICATION BY MASS SPECTROMETRY [LARGE SCALE ANALYSIS]</scope>
</reference>